<accession>B4TN07</accession>
<gene>
    <name evidence="1" type="primary">dnaA</name>
    <name type="ordered locus">SeSA_A4050</name>
</gene>
<reference key="1">
    <citation type="journal article" date="2011" name="J. Bacteriol.">
        <title>Comparative genomics of 28 Salmonella enterica isolates: evidence for CRISPR-mediated adaptive sublineage evolution.</title>
        <authorList>
            <person name="Fricke W.F."/>
            <person name="Mammel M.K."/>
            <person name="McDermott P.F."/>
            <person name="Tartera C."/>
            <person name="White D.G."/>
            <person name="Leclerc J.E."/>
            <person name="Ravel J."/>
            <person name="Cebula T.A."/>
        </authorList>
    </citation>
    <scope>NUCLEOTIDE SEQUENCE [LARGE SCALE GENOMIC DNA]</scope>
    <source>
        <strain>CVM19633</strain>
    </source>
</reference>
<protein>
    <recommendedName>
        <fullName evidence="1">Chromosomal replication initiator protein DnaA</fullName>
    </recommendedName>
</protein>
<sequence>MSLSLWQQCLARLQDELPATEFSMWIRPLQAELSDNTLALYAPNRFVLDWVRDKYLNNINGLLNTFCGADAPQLRFEVGTKPVTQTLKTPVHNVVAPAQTTTAQPQRVAPAARSGWDNVPAPAEPTYRSNVNVKHTFDNFVEGKSNQLARAAARQVADNPGGAYNPLFLYGGTGLGKTHLLHAVGNGIMARKPNAKVVYMHSERFVQDMVKALQNNAIEEFKRYYRSVDALLIDDIQFFANKERSQEEFFHTFNALLEGNQQIILTSDRYPKEINGVEDRLKSRFGWGLTVAIEPPELETRVAILMKKADENDIRLPGEVAFFIAKRLRSNVRELEGALNRVIANANFTGRAITIDFVREALRDLLALQEKLVTIDNIQKTVAEYYKIKIADLLSKRRSRSVARPRQMAMALAKELTNHSLPEIGDAFGGRDHTTVLHACRKIEQLREESHDIKEDFSNLIRTLSS</sequence>
<dbReference type="EMBL" id="CP001127">
    <property type="protein sequence ID" value="ACF91218.1"/>
    <property type="molecule type" value="Genomic_DNA"/>
</dbReference>
<dbReference type="RefSeq" id="WP_000059093.1">
    <property type="nucleotide sequence ID" value="NC_011094.1"/>
</dbReference>
<dbReference type="SMR" id="B4TN07"/>
<dbReference type="KEGG" id="sew:SeSA_A4050"/>
<dbReference type="HOGENOM" id="CLU_026910_0_1_6"/>
<dbReference type="Proteomes" id="UP000001865">
    <property type="component" value="Chromosome"/>
</dbReference>
<dbReference type="GO" id="GO:0005737">
    <property type="term" value="C:cytoplasm"/>
    <property type="evidence" value="ECO:0007669"/>
    <property type="project" value="UniProtKB-SubCell"/>
</dbReference>
<dbReference type="GO" id="GO:0005886">
    <property type="term" value="C:plasma membrane"/>
    <property type="evidence" value="ECO:0007669"/>
    <property type="project" value="TreeGrafter"/>
</dbReference>
<dbReference type="GO" id="GO:0005524">
    <property type="term" value="F:ATP binding"/>
    <property type="evidence" value="ECO:0007669"/>
    <property type="project" value="UniProtKB-UniRule"/>
</dbReference>
<dbReference type="GO" id="GO:0016887">
    <property type="term" value="F:ATP hydrolysis activity"/>
    <property type="evidence" value="ECO:0007669"/>
    <property type="project" value="InterPro"/>
</dbReference>
<dbReference type="GO" id="GO:0003688">
    <property type="term" value="F:DNA replication origin binding"/>
    <property type="evidence" value="ECO:0007669"/>
    <property type="project" value="UniProtKB-UniRule"/>
</dbReference>
<dbReference type="GO" id="GO:0008289">
    <property type="term" value="F:lipid binding"/>
    <property type="evidence" value="ECO:0007669"/>
    <property type="project" value="UniProtKB-KW"/>
</dbReference>
<dbReference type="GO" id="GO:0006270">
    <property type="term" value="P:DNA replication initiation"/>
    <property type="evidence" value="ECO:0007669"/>
    <property type="project" value="UniProtKB-UniRule"/>
</dbReference>
<dbReference type="GO" id="GO:0006275">
    <property type="term" value="P:regulation of DNA replication"/>
    <property type="evidence" value="ECO:0007669"/>
    <property type="project" value="UniProtKB-UniRule"/>
</dbReference>
<dbReference type="CDD" id="cd00009">
    <property type="entry name" value="AAA"/>
    <property type="match status" value="1"/>
</dbReference>
<dbReference type="CDD" id="cd06571">
    <property type="entry name" value="Bac_DnaA_C"/>
    <property type="match status" value="1"/>
</dbReference>
<dbReference type="FunFam" id="1.10.1750.10:FF:000001">
    <property type="entry name" value="Chromosomal replication initiator protein DnaA"/>
    <property type="match status" value="1"/>
</dbReference>
<dbReference type="FunFam" id="1.10.8.60:FF:000003">
    <property type="entry name" value="Chromosomal replication initiator protein DnaA"/>
    <property type="match status" value="1"/>
</dbReference>
<dbReference type="FunFam" id="3.30.300.180:FF:000001">
    <property type="entry name" value="Chromosomal replication initiator protein DnaA"/>
    <property type="match status" value="1"/>
</dbReference>
<dbReference type="FunFam" id="3.40.50.300:FF:000103">
    <property type="entry name" value="Chromosomal replication initiator protein DnaA"/>
    <property type="match status" value="1"/>
</dbReference>
<dbReference type="Gene3D" id="1.10.1750.10">
    <property type="match status" value="1"/>
</dbReference>
<dbReference type="Gene3D" id="1.10.8.60">
    <property type="match status" value="1"/>
</dbReference>
<dbReference type="Gene3D" id="3.30.300.180">
    <property type="match status" value="1"/>
</dbReference>
<dbReference type="Gene3D" id="3.40.50.300">
    <property type="entry name" value="P-loop containing nucleotide triphosphate hydrolases"/>
    <property type="match status" value="1"/>
</dbReference>
<dbReference type="HAMAP" id="MF_00377">
    <property type="entry name" value="DnaA_bact"/>
    <property type="match status" value="1"/>
</dbReference>
<dbReference type="InterPro" id="IPR003593">
    <property type="entry name" value="AAA+_ATPase"/>
</dbReference>
<dbReference type="InterPro" id="IPR001957">
    <property type="entry name" value="Chromosome_initiator_DnaA"/>
</dbReference>
<dbReference type="InterPro" id="IPR020591">
    <property type="entry name" value="Chromosome_initiator_DnaA-like"/>
</dbReference>
<dbReference type="InterPro" id="IPR018312">
    <property type="entry name" value="Chromosome_initiator_DnaA_CS"/>
</dbReference>
<dbReference type="InterPro" id="IPR013159">
    <property type="entry name" value="DnaA_C"/>
</dbReference>
<dbReference type="InterPro" id="IPR013317">
    <property type="entry name" value="DnaA_dom"/>
</dbReference>
<dbReference type="InterPro" id="IPR024633">
    <property type="entry name" value="DnaA_N_dom"/>
</dbReference>
<dbReference type="InterPro" id="IPR038454">
    <property type="entry name" value="DnaA_N_sf"/>
</dbReference>
<dbReference type="InterPro" id="IPR027417">
    <property type="entry name" value="P-loop_NTPase"/>
</dbReference>
<dbReference type="InterPro" id="IPR010921">
    <property type="entry name" value="Trp_repressor/repl_initiator"/>
</dbReference>
<dbReference type="NCBIfam" id="TIGR00362">
    <property type="entry name" value="DnaA"/>
    <property type="match status" value="1"/>
</dbReference>
<dbReference type="PANTHER" id="PTHR30050">
    <property type="entry name" value="CHROMOSOMAL REPLICATION INITIATOR PROTEIN DNAA"/>
    <property type="match status" value="1"/>
</dbReference>
<dbReference type="PANTHER" id="PTHR30050:SF2">
    <property type="entry name" value="CHROMOSOMAL REPLICATION INITIATOR PROTEIN DNAA"/>
    <property type="match status" value="1"/>
</dbReference>
<dbReference type="Pfam" id="PF00308">
    <property type="entry name" value="Bac_DnaA"/>
    <property type="match status" value="1"/>
</dbReference>
<dbReference type="Pfam" id="PF08299">
    <property type="entry name" value="Bac_DnaA_C"/>
    <property type="match status" value="1"/>
</dbReference>
<dbReference type="Pfam" id="PF11638">
    <property type="entry name" value="DnaA_N"/>
    <property type="match status" value="1"/>
</dbReference>
<dbReference type="PRINTS" id="PR00051">
    <property type="entry name" value="DNAA"/>
</dbReference>
<dbReference type="SMART" id="SM00382">
    <property type="entry name" value="AAA"/>
    <property type="match status" value="1"/>
</dbReference>
<dbReference type="SMART" id="SM00760">
    <property type="entry name" value="Bac_DnaA_C"/>
    <property type="match status" value="1"/>
</dbReference>
<dbReference type="SUPFAM" id="SSF52540">
    <property type="entry name" value="P-loop containing nucleoside triphosphate hydrolases"/>
    <property type="match status" value="1"/>
</dbReference>
<dbReference type="SUPFAM" id="SSF48295">
    <property type="entry name" value="TrpR-like"/>
    <property type="match status" value="1"/>
</dbReference>
<dbReference type="PROSITE" id="PS01008">
    <property type="entry name" value="DNAA"/>
    <property type="match status" value="1"/>
</dbReference>
<keyword id="KW-0067">ATP-binding</keyword>
<keyword id="KW-0963">Cytoplasm</keyword>
<keyword id="KW-0235">DNA replication</keyword>
<keyword id="KW-0238">DNA-binding</keyword>
<keyword id="KW-0446">Lipid-binding</keyword>
<keyword id="KW-0547">Nucleotide-binding</keyword>
<name>DNAA_SALSV</name>
<proteinExistence type="inferred from homology"/>
<comment type="function">
    <text evidence="1">Plays an essential role in the initiation and regulation of chromosomal replication. ATP-DnaA binds to the origin of replication (oriC) to initiate formation of the DNA replication initiation complex once per cell cycle. Binds the DnaA box (a 9 base pair repeat at the origin) and separates the double-stranded (ds)DNA. Forms a right-handed helical filament on oriC DNA; dsDNA binds to the exterior of the filament while single-stranded (ss)DNA is stabiized in the filament's interior. The ATP-DnaA-oriC complex binds and stabilizes one strand of the AT-rich DNA unwinding element (DUE), permitting loading of DNA polymerase. After initiation quickly degrades to an ADP-DnaA complex that is not apt for DNA replication. Binds acidic phospholipids.</text>
</comment>
<comment type="subunit">
    <text evidence="1">Oligomerizes as a right-handed, spiral filament on DNA at oriC.</text>
</comment>
<comment type="subcellular location">
    <subcellularLocation>
        <location evidence="1">Cytoplasm</location>
    </subcellularLocation>
</comment>
<comment type="domain">
    <text evidence="1">Domain I is involved in oligomerization and binding regulators, domain II is flexibile and of varying length in different bacteria, domain III forms the AAA+ region, while domain IV binds dsDNA.</text>
</comment>
<comment type="similarity">
    <text evidence="1">Belongs to the DnaA family.</text>
</comment>
<organism>
    <name type="scientific">Salmonella schwarzengrund (strain CVM19633)</name>
    <dbReference type="NCBI Taxonomy" id="439843"/>
    <lineage>
        <taxon>Bacteria</taxon>
        <taxon>Pseudomonadati</taxon>
        <taxon>Pseudomonadota</taxon>
        <taxon>Gammaproteobacteria</taxon>
        <taxon>Enterobacterales</taxon>
        <taxon>Enterobacteriaceae</taxon>
        <taxon>Salmonella</taxon>
    </lineage>
</organism>
<feature type="chain" id="PRO_1000122015" description="Chromosomal replication initiator protein DnaA">
    <location>
        <begin position="1"/>
        <end position="466"/>
    </location>
</feature>
<feature type="region of interest" description="Domain I, interacts with DnaA modulators" evidence="1">
    <location>
        <begin position="1"/>
        <end position="86"/>
    </location>
</feature>
<feature type="region of interest" description="Domain II" evidence="1">
    <location>
        <begin position="86"/>
        <end position="129"/>
    </location>
</feature>
<feature type="region of interest" description="Domain III, AAA+ region" evidence="1">
    <location>
        <begin position="130"/>
        <end position="346"/>
    </location>
</feature>
<feature type="region of interest" description="Domain IV, binds dsDNA" evidence="1">
    <location>
        <begin position="347"/>
        <end position="466"/>
    </location>
</feature>
<feature type="binding site" evidence="1">
    <location>
        <position position="174"/>
    </location>
    <ligand>
        <name>ATP</name>
        <dbReference type="ChEBI" id="CHEBI:30616"/>
    </ligand>
</feature>
<feature type="binding site" evidence="1">
    <location>
        <position position="176"/>
    </location>
    <ligand>
        <name>ATP</name>
        <dbReference type="ChEBI" id="CHEBI:30616"/>
    </ligand>
</feature>
<feature type="binding site" evidence="1">
    <location>
        <position position="177"/>
    </location>
    <ligand>
        <name>ATP</name>
        <dbReference type="ChEBI" id="CHEBI:30616"/>
    </ligand>
</feature>
<feature type="binding site" evidence="1">
    <location>
        <position position="178"/>
    </location>
    <ligand>
        <name>ATP</name>
        <dbReference type="ChEBI" id="CHEBI:30616"/>
    </ligand>
</feature>
<evidence type="ECO:0000255" key="1">
    <source>
        <dbReference type="HAMAP-Rule" id="MF_00377"/>
    </source>
</evidence>